<organism>
    <name type="scientific">Sus scrofa</name>
    <name type="common">Pig</name>
    <dbReference type="NCBI Taxonomy" id="9823"/>
    <lineage>
        <taxon>Eukaryota</taxon>
        <taxon>Metazoa</taxon>
        <taxon>Chordata</taxon>
        <taxon>Craniata</taxon>
        <taxon>Vertebrata</taxon>
        <taxon>Euteleostomi</taxon>
        <taxon>Mammalia</taxon>
        <taxon>Eutheria</taxon>
        <taxon>Laurasiatheria</taxon>
        <taxon>Artiodactyla</taxon>
        <taxon>Suina</taxon>
        <taxon>Suidae</taxon>
        <taxon>Sus</taxon>
    </lineage>
</organism>
<feature type="chain" id="PRO_0000239375" description="KH domain-containing RNA-binding protein QKI">
    <location>
        <begin position="1"/>
        <end position="341"/>
    </location>
</feature>
<feature type="domain" description="KH">
    <location>
        <begin position="87"/>
        <end position="153"/>
    </location>
</feature>
<feature type="region of interest" description="Qua1 domain; involved in homodimerization" evidence="1">
    <location>
        <begin position="11"/>
        <end position="82"/>
    </location>
</feature>
<feature type="region of interest" description="Qua2 domain; involved in RNA binding" evidence="2">
    <location>
        <begin position="182"/>
        <end position="213"/>
    </location>
</feature>
<feature type="short sequence motif" description="SH3-binding">
    <location>
        <begin position="276"/>
        <end position="279"/>
    </location>
</feature>
<feature type="short sequence motif" description="Nuclear localization signal" evidence="3">
    <location>
        <begin position="324"/>
        <end position="330"/>
    </location>
</feature>
<feature type="site" description="Involved in RNA binding" evidence="2">
    <location>
        <position position="97"/>
    </location>
</feature>
<feature type="site" description="Involved in RNA binding" evidence="2">
    <location>
        <position position="120"/>
    </location>
</feature>
<feature type="site" description="Involved in RNA binding" evidence="2">
    <location>
        <position position="124"/>
    </location>
</feature>
<feature type="site" description="Involved in RNA binding" evidence="2">
    <location>
        <position position="130"/>
    </location>
</feature>
<feature type="site" description="Involved in RNA binding" evidence="2">
    <location>
        <position position="190"/>
    </location>
</feature>
<feature type="site" description="Involved in RNA binding" evidence="2">
    <location>
        <position position="193"/>
    </location>
</feature>
<feature type="modified residue" description="Phosphoserine" evidence="2">
    <location>
        <position position="188"/>
    </location>
</feature>
<feature type="modified residue" description="Omega-N-methylarginine" evidence="2">
    <location>
        <position position="227"/>
    </location>
</feature>
<feature type="modified residue" description="Asymmetric dimethylarginine; by CARM1; alternate" evidence="2">
    <location>
        <position position="242"/>
    </location>
</feature>
<feature type="modified residue" description="Omega-N-methylarginine; alternate" evidence="2">
    <location>
        <position position="242"/>
    </location>
</feature>
<feature type="modified residue" description="Omega-N-methylarginine" evidence="3">
    <location>
        <position position="256"/>
    </location>
</feature>
<gene>
    <name evidence="3" type="primary">QKI</name>
</gene>
<accession>Q5W9D5</accession>
<protein>
    <recommendedName>
        <fullName evidence="3">KH domain-containing RNA-binding protein QKI</fullName>
    </recommendedName>
    <alternativeName>
        <fullName evidence="3">Protein quaking</fullName>
        <shortName evidence="4">PqkI</shortName>
    </alternativeName>
</protein>
<reference key="1">
    <citation type="journal article" date="2005" name="DNA Seq.">
        <title>Nucleotide sequence of complementary DNA encoding for quaking protein of cow, horse and pig.</title>
        <authorList>
            <person name="Murata T."/>
            <person name="Yamashiro Y."/>
            <person name="Kondo T."/>
            <person name="Nakaichi M."/>
            <person name="Une S."/>
            <person name="Taura Y."/>
        </authorList>
    </citation>
    <scope>NUCLEOTIDE SEQUENCE [MRNA]</scope>
</reference>
<dbReference type="EMBL" id="AB177988">
    <property type="protein sequence ID" value="BAD67435.1"/>
    <property type="molecule type" value="mRNA"/>
</dbReference>
<dbReference type="RefSeq" id="NP_001007196.1">
    <property type="nucleotide sequence ID" value="NM_001007195.1"/>
</dbReference>
<dbReference type="BMRB" id="Q5W9D5"/>
<dbReference type="SMR" id="Q5W9D5"/>
<dbReference type="FunCoup" id="Q5W9D5">
    <property type="interactions" value="1360"/>
</dbReference>
<dbReference type="IntAct" id="Q5W9D5">
    <property type="interactions" value="1"/>
</dbReference>
<dbReference type="STRING" id="9823.ENSSSCP00000051820"/>
<dbReference type="GlyGen" id="Q5W9D5">
    <property type="glycosylation" value="1 site"/>
</dbReference>
<dbReference type="PaxDb" id="9823-ENSSSCP00000004354"/>
<dbReference type="PeptideAtlas" id="Q5W9D5"/>
<dbReference type="Ensembl" id="ENSSSCT00070054224.1">
    <property type="protein sequence ID" value="ENSSSCP00070045981.1"/>
    <property type="gene ID" value="ENSSSCG00070027034.1"/>
</dbReference>
<dbReference type="Ensembl" id="ENSSSCT00105039961">
    <property type="protein sequence ID" value="ENSSSCP00105027736"/>
    <property type="gene ID" value="ENSSSCG00105020939"/>
</dbReference>
<dbReference type="GeneID" id="492277"/>
<dbReference type="KEGG" id="ssc:492277"/>
<dbReference type="CTD" id="9444"/>
<dbReference type="eggNOG" id="KOG1588">
    <property type="taxonomic scope" value="Eukaryota"/>
</dbReference>
<dbReference type="InParanoid" id="Q5W9D5"/>
<dbReference type="OrthoDB" id="6777263at2759"/>
<dbReference type="Proteomes" id="UP000008227">
    <property type="component" value="Unplaced"/>
</dbReference>
<dbReference type="Proteomes" id="UP000314985">
    <property type="component" value="Chromosome 1"/>
</dbReference>
<dbReference type="Proteomes" id="UP000694570">
    <property type="component" value="Unplaced"/>
</dbReference>
<dbReference type="Proteomes" id="UP000694571">
    <property type="component" value="Unplaced"/>
</dbReference>
<dbReference type="Proteomes" id="UP000694720">
    <property type="component" value="Unplaced"/>
</dbReference>
<dbReference type="Proteomes" id="UP000694722">
    <property type="component" value="Unplaced"/>
</dbReference>
<dbReference type="Proteomes" id="UP000694723">
    <property type="component" value="Unplaced"/>
</dbReference>
<dbReference type="Proteomes" id="UP000694724">
    <property type="component" value="Unplaced"/>
</dbReference>
<dbReference type="Proteomes" id="UP000694725">
    <property type="component" value="Unplaced"/>
</dbReference>
<dbReference type="Proteomes" id="UP000694726">
    <property type="component" value="Unplaced"/>
</dbReference>
<dbReference type="Proteomes" id="UP000694727">
    <property type="component" value="Unplaced"/>
</dbReference>
<dbReference type="Proteomes" id="UP000694728">
    <property type="component" value="Unplaced"/>
</dbReference>
<dbReference type="GO" id="GO:0005737">
    <property type="term" value="C:cytoplasm"/>
    <property type="evidence" value="ECO:0007669"/>
    <property type="project" value="UniProtKB-SubCell"/>
</dbReference>
<dbReference type="GO" id="GO:0005634">
    <property type="term" value="C:nucleus"/>
    <property type="evidence" value="ECO:0000318"/>
    <property type="project" value="GO_Central"/>
</dbReference>
<dbReference type="GO" id="GO:0003677">
    <property type="term" value="F:DNA binding"/>
    <property type="evidence" value="ECO:0007669"/>
    <property type="project" value="UniProtKB-KW"/>
</dbReference>
<dbReference type="GO" id="GO:0035198">
    <property type="term" value="F:miRNA binding"/>
    <property type="evidence" value="ECO:0000250"/>
    <property type="project" value="UniProtKB"/>
</dbReference>
<dbReference type="GO" id="GO:0003729">
    <property type="term" value="F:mRNA binding"/>
    <property type="evidence" value="ECO:0000318"/>
    <property type="project" value="GO_Central"/>
</dbReference>
<dbReference type="GO" id="GO:0017124">
    <property type="term" value="F:SH3 domain binding"/>
    <property type="evidence" value="ECO:0007669"/>
    <property type="project" value="UniProtKB-KW"/>
</dbReference>
<dbReference type="GO" id="GO:0014004">
    <property type="term" value="P:microglia differentiation"/>
    <property type="evidence" value="ECO:0000250"/>
    <property type="project" value="UniProtKB"/>
</dbReference>
<dbReference type="GO" id="GO:0051028">
    <property type="term" value="P:mRNA transport"/>
    <property type="evidence" value="ECO:0007669"/>
    <property type="project" value="UniProtKB-KW"/>
</dbReference>
<dbReference type="GO" id="GO:1905869">
    <property type="term" value="P:negative regulation of 3'-UTR-mediated mRNA stabilization"/>
    <property type="evidence" value="ECO:0000250"/>
    <property type="project" value="UniProtKB"/>
</dbReference>
<dbReference type="GO" id="GO:0120163">
    <property type="term" value="P:negative regulation of cold-induced thermogenesis"/>
    <property type="evidence" value="ECO:0000250"/>
    <property type="project" value="UniProtKB"/>
</dbReference>
<dbReference type="GO" id="GO:0045650">
    <property type="term" value="P:negative regulation of macrophage differentiation"/>
    <property type="evidence" value="ECO:0000250"/>
    <property type="project" value="UniProtKB"/>
</dbReference>
<dbReference type="GO" id="GO:2000626">
    <property type="term" value="P:negative regulation of miRNA catabolic process"/>
    <property type="evidence" value="ECO:0000250"/>
    <property type="project" value="UniProtKB"/>
</dbReference>
<dbReference type="GO" id="GO:0017148">
    <property type="term" value="P:negative regulation of translation"/>
    <property type="evidence" value="ECO:0000250"/>
    <property type="project" value="UniProtKB"/>
</dbReference>
<dbReference type="GO" id="GO:0048710">
    <property type="term" value="P:regulation of astrocyte differentiation"/>
    <property type="evidence" value="ECO:0000250"/>
    <property type="project" value="UniProtKB"/>
</dbReference>
<dbReference type="GO" id="GO:0010717">
    <property type="term" value="P:regulation of epithelial to mesenchymal transition"/>
    <property type="evidence" value="ECO:0000250"/>
    <property type="project" value="UniProtKB"/>
</dbReference>
<dbReference type="GO" id="GO:0048024">
    <property type="term" value="P:regulation of mRNA splicing, via spliceosome"/>
    <property type="evidence" value="ECO:0000250"/>
    <property type="project" value="UniProtKB"/>
</dbReference>
<dbReference type="GO" id="GO:0160091">
    <property type="term" value="P:spliceosome-depend formation of circular RNA"/>
    <property type="evidence" value="ECO:0000250"/>
    <property type="project" value="UniProtKB"/>
</dbReference>
<dbReference type="GO" id="GO:0035886">
    <property type="term" value="P:vascular associated smooth muscle cell differentiation"/>
    <property type="evidence" value="ECO:0000250"/>
    <property type="project" value="UniProtKB"/>
</dbReference>
<dbReference type="CDD" id="cd22465">
    <property type="entry name" value="KH-I_Hqk"/>
    <property type="match status" value="1"/>
</dbReference>
<dbReference type="FunFam" id="1.20.5.4010:FF:000001">
    <property type="entry name" value="protein quaking isoform X1"/>
    <property type="match status" value="1"/>
</dbReference>
<dbReference type="FunFam" id="3.30.1370.10:FF:000055">
    <property type="entry name" value="protein quaking isoform X1"/>
    <property type="match status" value="1"/>
</dbReference>
<dbReference type="Gene3D" id="1.20.5.4010">
    <property type="match status" value="1"/>
</dbReference>
<dbReference type="Gene3D" id="3.30.1370.10">
    <property type="entry name" value="K Homology domain, type 1"/>
    <property type="match status" value="1"/>
</dbReference>
<dbReference type="InterPro" id="IPR045071">
    <property type="entry name" value="BBP-like"/>
</dbReference>
<dbReference type="InterPro" id="IPR055256">
    <property type="entry name" value="KH_1_KHDC4/BBP-like"/>
</dbReference>
<dbReference type="InterPro" id="IPR004087">
    <property type="entry name" value="KH_dom"/>
</dbReference>
<dbReference type="InterPro" id="IPR036612">
    <property type="entry name" value="KH_dom_type_1_sf"/>
</dbReference>
<dbReference type="InterPro" id="IPR032367">
    <property type="entry name" value="Quaking_NLS"/>
</dbReference>
<dbReference type="InterPro" id="IPR032377">
    <property type="entry name" value="STAR_dimer"/>
</dbReference>
<dbReference type="PANTHER" id="PTHR11208:SF125">
    <property type="entry name" value="KH DOMAIN-CONTAINING RNA-BINDING PROTEIN QKI"/>
    <property type="match status" value="1"/>
</dbReference>
<dbReference type="PANTHER" id="PTHR11208">
    <property type="entry name" value="RNA-BINDING PROTEIN RELATED"/>
    <property type="match status" value="1"/>
</dbReference>
<dbReference type="Pfam" id="PF22675">
    <property type="entry name" value="KH-I_KHDC4-BBP"/>
    <property type="match status" value="1"/>
</dbReference>
<dbReference type="Pfam" id="PF16551">
    <property type="entry name" value="Quaking_NLS"/>
    <property type="match status" value="1"/>
</dbReference>
<dbReference type="Pfam" id="PF16544">
    <property type="entry name" value="STAR_dimer"/>
    <property type="match status" value="1"/>
</dbReference>
<dbReference type="SMART" id="SM00322">
    <property type="entry name" value="KH"/>
    <property type="match status" value="1"/>
</dbReference>
<dbReference type="SUPFAM" id="SSF54791">
    <property type="entry name" value="Eukaryotic type KH-domain (KH-domain type I)"/>
    <property type="match status" value="1"/>
</dbReference>
<proteinExistence type="evidence at transcript level"/>
<evidence type="ECO:0000250" key="1">
    <source>
        <dbReference type="UniProtKB" id="Q17339"/>
    </source>
</evidence>
<evidence type="ECO:0000250" key="2">
    <source>
        <dbReference type="UniProtKB" id="Q96PU8"/>
    </source>
</evidence>
<evidence type="ECO:0000250" key="3">
    <source>
        <dbReference type="UniProtKB" id="Q9QYS9"/>
    </source>
</evidence>
<evidence type="ECO:0000305" key="4"/>
<name>QKI_PIG</name>
<comment type="function">
    <text evidence="2 3">RNA reader protein, which recognizes and binds specific RNAs, thereby regulating RNA metabolic processes, such as pre-mRNA splicing, circular RNA (circRNA) formation, mRNA export, mRNA stability and/or translation. Involved in various cellular processes, such as mRNA storage into stress granules, apoptosis, lipid deposition, interferon response, glial cell fate and development. Binds to the 5'-NACUAAY-N(1,20)-UAAY-3' RNA core sequence. Acts as a mRNA modification reader that specifically recognizes and binds mRNA transcripts modified by internal N(7)-methylguanine (m7G). Promotes the formation of circular RNAs (circRNAs) during the epithelial to mesenchymal transition and in cardiomyocytes: acts by binding to sites flanking circRNA-forming exons. CircRNAs are produced by back-splicing circularization of pre-mRNAs. Plays a central role in myelinization via 3 distinct mechanisms (By similarity). First, acts by protecting and promoting stability of target mRNAs such as MBP, SIRT2 and CDKN1B, which promotes oligodendrocyte differentiation. Second, participates in mRNA transport by regulating the nuclear export of MBP mRNA. Finally, indirectly regulates mRNA splicing of MAG pre-mRNA during oligodendrocyte differentiation by acting as a negative regulator of MAG exon 12 alternative splicing: acts by binding to HNRNPA1 mRNA splicing factor, preventing its translation. Involved in microglia differentiation and remyelination by regulating microexon alternative splicing of the Rho GTPase pathway (By similarity). Involved in macrophage differentiation: promotes monocyte differentiation by regulating pre-mRNA splicing in naive peripheral blood monocytes (By similarity). Acts as an important regulator of muscle development: required for the contractile function of cardiomyocytes by regulating alternative splicing of cardiomyocyte transcripts. Acts as a negative regulator of thermogenesis by decreasing stability, nuclear export and translation of mRNAs encoding PPARGC1A and UCP1. Also required for visceral endoderm function and blood vessel development (By similarity). May also play a role in smooth muscle development (By similarity). In addition to its RNA-binding activity, also acts as a nuclear transcription coactivator for SREBF2/SREBP2 (By similarity).</text>
</comment>
<comment type="subunit">
    <text evidence="2 3">Homodimer; does not require RNA to homodimerize (By similarity). Able to heterodimerize with BICC1 (By similarity).</text>
</comment>
<comment type="subcellular location">
    <subcellularLocation>
        <location evidence="2">Nucleus</location>
    </subcellularLocation>
    <subcellularLocation>
        <location evidence="2">Cytoplasm</location>
    </subcellularLocation>
</comment>
<comment type="domain">
    <text evidence="2">The KH domain and the Qua2 region are involved in RNA binding.</text>
</comment>
<comment type="PTM">
    <text evidence="3">Methylated by PRMT1.</text>
</comment>
<comment type="PTM">
    <text evidence="3">Tyrosine phosphorylated at its C-terminus, probably by FYN. Phosphorylation leads to decreased mRNA-binding affinity, affecting transport and/or stabilization of MBP mRNA (By similarity).</text>
</comment>
<comment type="PTM">
    <text evidence="3">Ubiquitinated by RNF6 in macrophages, leading to its degradation.</text>
</comment>
<comment type="similarity">
    <text evidence="4">Belongs to the quaking family.</text>
</comment>
<sequence>MVGEMETKEKPKPTPDYLMQLMNDKKLMSSLPNFCGIFNHLERLLDEEISRVRKDMYNDTLNGSTEKRSAELPDAVGPIVQLQEKLYVPVKEYPDFNFVGRILGPRGLTAKQLEAETGCKIMVRGKGSMRDKKKEEQNRGKPNWEHLNEDLHVLITVEDAQNRAEIKLKRAVEEVKKLLVPAAEGEDSLKKMQLMELAILNGTYRDANIKSPALAFSLAATAQAAPRIITGPAPVLPPAALRTPTPAGPTIMPLIRQIQTAVMPNGTPHPTAAIVPPGPEAGLIYTPYEYPYTLAPATSILEYPIEPSGVLGAVATKVRRHDMRVHPYQRIVTADRAATGN</sequence>
<keyword id="KW-0963">Cytoplasm</keyword>
<keyword id="KW-0217">Developmental protein</keyword>
<keyword id="KW-0221">Differentiation</keyword>
<keyword id="KW-0238">DNA-binding</keyword>
<keyword id="KW-0488">Methylation</keyword>
<keyword id="KW-0507">mRNA processing</keyword>
<keyword id="KW-0508">mRNA splicing</keyword>
<keyword id="KW-0509">mRNA transport</keyword>
<keyword id="KW-0539">Nucleus</keyword>
<keyword id="KW-0597">Phosphoprotein</keyword>
<keyword id="KW-1185">Reference proteome</keyword>
<keyword id="KW-0694">RNA-binding</keyword>
<keyword id="KW-0729">SH3-binding</keyword>
<keyword id="KW-0810">Translation regulation</keyword>
<keyword id="KW-0813">Transport</keyword>
<keyword id="KW-0832">Ubl conjugation</keyword>